<feature type="chain" id="PRO_1000052638" description="Large ribosomal subunit protein uL22">
    <location>
        <begin position="1"/>
        <end position="119"/>
    </location>
</feature>
<reference key="1">
    <citation type="submission" date="2007-09" db="EMBL/GenBank/DDBJ databases">
        <title>Complete genome sequencing of Rickettsia bellii.</title>
        <authorList>
            <person name="Madan A."/>
            <person name="Lee H."/>
            <person name="Madan A."/>
            <person name="Yoon J.-G."/>
            <person name="Ryu G.-Y."/>
            <person name="Dasch G."/>
            <person name="Ereemeva M."/>
        </authorList>
    </citation>
    <scope>NUCLEOTIDE SEQUENCE [LARGE SCALE GENOMIC DNA]</scope>
    <source>
        <strain>OSU 85-389</strain>
    </source>
</reference>
<accession>A8GVB9</accession>
<sequence length="119" mass="13235">MVQENKNFATAKAKSIRVSPRKLNLVAAFIRNMKVSEALVQLTFSPKRISKVVKACLQSAVANAENNLGLDIDRLVITNATVGKALVMKRVMPRAKGRATRINKFFSNLYITVTEKEDN</sequence>
<protein>
    <recommendedName>
        <fullName evidence="1">Large ribosomal subunit protein uL22</fullName>
    </recommendedName>
    <alternativeName>
        <fullName evidence="2">50S ribosomal protein L22</fullName>
    </alternativeName>
</protein>
<gene>
    <name evidence="1" type="primary">rplV</name>
    <name type="ordered locus">A1I_02060</name>
</gene>
<name>RL22_RICB8</name>
<evidence type="ECO:0000255" key="1">
    <source>
        <dbReference type="HAMAP-Rule" id="MF_01331"/>
    </source>
</evidence>
<evidence type="ECO:0000305" key="2"/>
<organism>
    <name type="scientific">Rickettsia bellii (strain OSU 85-389)</name>
    <dbReference type="NCBI Taxonomy" id="391896"/>
    <lineage>
        <taxon>Bacteria</taxon>
        <taxon>Pseudomonadati</taxon>
        <taxon>Pseudomonadota</taxon>
        <taxon>Alphaproteobacteria</taxon>
        <taxon>Rickettsiales</taxon>
        <taxon>Rickettsiaceae</taxon>
        <taxon>Rickettsieae</taxon>
        <taxon>Rickettsia</taxon>
        <taxon>belli group</taxon>
    </lineage>
</organism>
<dbReference type="EMBL" id="CP000849">
    <property type="protein sequence ID" value="ABV78796.1"/>
    <property type="molecule type" value="Genomic_DNA"/>
</dbReference>
<dbReference type="RefSeq" id="WP_011477716.1">
    <property type="nucleotide sequence ID" value="NC_009883.1"/>
</dbReference>
<dbReference type="SMR" id="A8GVB9"/>
<dbReference type="KEGG" id="rbo:A1I_02060"/>
<dbReference type="HOGENOM" id="CLU_083987_3_0_5"/>
<dbReference type="GO" id="GO:0022625">
    <property type="term" value="C:cytosolic large ribosomal subunit"/>
    <property type="evidence" value="ECO:0007669"/>
    <property type="project" value="TreeGrafter"/>
</dbReference>
<dbReference type="GO" id="GO:0019843">
    <property type="term" value="F:rRNA binding"/>
    <property type="evidence" value="ECO:0007669"/>
    <property type="project" value="UniProtKB-UniRule"/>
</dbReference>
<dbReference type="GO" id="GO:0003735">
    <property type="term" value="F:structural constituent of ribosome"/>
    <property type="evidence" value="ECO:0007669"/>
    <property type="project" value="InterPro"/>
</dbReference>
<dbReference type="GO" id="GO:0006412">
    <property type="term" value="P:translation"/>
    <property type="evidence" value="ECO:0007669"/>
    <property type="project" value="UniProtKB-UniRule"/>
</dbReference>
<dbReference type="CDD" id="cd00336">
    <property type="entry name" value="Ribosomal_L22"/>
    <property type="match status" value="1"/>
</dbReference>
<dbReference type="Gene3D" id="3.90.470.10">
    <property type="entry name" value="Ribosomal protein L22/L17"/>
    <property type="match status" value="1"/>
</dbReference>
<dbReference type="HAMAP" id="MF_01331_B">
    <property type="entry name" value="Ribosomal_uL22_B"/>
    <property type="match status" value="1"/>
</dbReference>
<dbReference type="InterPro" id="IPR001063">
    <property type="entry name" value="Ribosomal_uL22"/>
</dbReference>
<dbReference type="InterPro" id="IPR005727">
    <property type="entry name" value="Ribosomal_uL22_bac/chlpt-type"/>
</dbReference>
<dbReference type="InterPro" id="IPR047867">
    <property type="entry name" value="Ribosomal_uL22_bac/org-type"/>
</dbReference>
<dbReference type="InterPro" id="IPR018260">
    <property type="entry name" value="Ribosomal_uL22_CS"/>
</dbReference>
<dbReference type="InterPro" id="IPR036394">
    <property type="entry name" value="Ribosomal_uL22_sf"/>
</dbReference>
<dbReference type="NCBIfam" id="TIGR01044">
    <property type="entry name" value="rplV_bact"/>
    <property type="match status" value="1"/>
</dbReference>
<dbReference type="PANTHER" id="PTHR13501">
    <property type="entry name" value="CHLOROPLAST 50S RIBOSOMAL PROTEIN L22-RELATED"/>
    <property type="match status" value="1"/>
</dbReference>
<dbReference type="PANTHER" id="PTHR13501:SF8">
    <property type="entry name" value="LARGE RIBOSOMAL SUBUNIT PROTEIN UL22M"/>
    <property type="match status" value="1"/>
</dbReference>
<dbReference type="Pfam" id="PF00237">
    <property type="entry name" value="Ribosomal_L22"/>
    <property type="match status" value="1"/>
</dbReference>
<dbReference type="SUPFAM" id="SSF54843">
    <property type="entry name" value="Ribosomal protein L22"/>
    <property type="match status" value="1"/>
</dbReference>
<dbReference type="PROSITE" id="PS00464">
    <property type="entry name" value="RIBOSOMAL_L22"/>
    <property type="match status" value="1"/>
</dbReference>
<comment type="function">
    <text evidence="1">This protein binds specifically to 23S rRNA; its binding is stimulated by other ribosomal proteins, e.g. L4, L17, and L20. It is important during the early stages of 50S assembly. It makes multiple contacts with different domains of the 23S rRNA in the assembled 50S subunit and ribosome (By similarity).</text>
</comment>
<comment type="function">
    <text evidence="1">The globular domain of the protein is located near the polypeptide exit tunnel on the outside of the subunit, while an extended beta-hairpin is found that lines the wall of the exit tunnel in the center of the 70S ribosome.</text>
</comment>
<comment type="subunit">
    <text evidence="1">Part of the 50S ribosomal subunit.</text>
</comment>
<comment type="similarity">
    <text evidence="1">Belongs to the universal ribosomal protein uL22 family.</text>
</comment>
<proteinExistence type="inferred from homology"/>
<keyword id="KW-0687">Ribonucleoprotein</keyword>
<keyword id="KW-0689">Ribosomal protein</keyword>
<keyword id="KW-0694">RNA-binding</keyword>
<keyword id="KW-0699">rRNA-binding</keyword>